<proteinExistence type="inferred from homology"/>
<keyword id="KW-0276">Fatty acid metabolism</keyword>
<keyword id="KW-0443">Lipid metabolism</keyword>
<keyword id="KW-0456">Lyase</keyword>
<keyword id="KW-1185">Reference proteome</keyword>
<evidence type="ECO:0000250" key="1"/>
<evidence type="ECO:0000305" key="2"/>
<feature type="chain" id="PRO_0000427094" description="Probable enoyl-CoA hydratase echA8">
    <location>
        <begin position="1"/>
        <end position="257"/>
    </location>
</feature>
<dbReference type="EC" id="4.2.1.17"/>
<dbReference type="EMBL" id="AE000516">
    <property type="protein sequence ID" value="AAK45356.1"/>
    <property type="molecule type" value="Genomic_DNA"/>
</dbReference>
<dbReference type="PIR" id="D70893">
    <property type="entry name" value="D70893"/>
</dbReference>
<dbReference type="RefSeq" id="WP_003405712.1">
    <property type="nucleotide sequence ID" value="NZ_KK341227.1"/>
</dbReference>
<dbReference type="SMR" id="P9WNN8"/>
<dbReference type="KEGG" id="mtc:MT1100"/>
<dbReference type="PATRIC" id="fig|83331.31.peg.1185"/>
<dbReference type="HOGENOM" id="CLU_009834_7_6_11"/>
<dbReference type="Proteomes" id="UP000001020">
    <property type="component" value="Chromosome"/>
</dbReference>
<dbReference type="GO" id="GO:0004300">
    <property type="term" value="F:enoyl-CoA hydratase activity"/>
    <property type="evidence" value="ECO:0007669"/>
    <property type="project" value="UniProtKB-EC"/>
</dbReference>
<dbReference type="GO" id="GO:0006635">
    <property type="term" value="P:fatty acid beta-oxidation"/>
    <property type="evidence" value="ECO:0007669"/>
    <property type="project" value="TreeGrafter"/>
</dbReference>
<dbReference type="CDD" id="cd06558">
    <property type="entry name" value="crotonase-like"/>
    <property type="match status" value="1"/>
</dbReference>
<dbReference type="FunFam" id="3.90.226.10:FF:000019">
    <property type="entry name" value="Enoyl-CoA hydratase, mitochondrial"/>
    <property type="match status" value="1"/>
</dbReference>
<dbReference type="FunFam" id="1.10.12.10:FF:000001">
    <property type="entry name" value="Probable enoyl-CoA hydratase, mitochondrial"/>
    <property type="match status" value="1"/>
</dbReference>
<dbReference type="Gene3D" id="3.90.226.10">
    <property type="entry name" value="2-enoyl-CoA Hydratase, Chain A, domain 1"/>
    <property type="match status" value="1"/>
</dbReference>
<dbReference type="Gene3D" id="1.10.12.10">
    <property type="entry name" value="Lyase 2-enoyl-coa Hydratase, Chain A, domain 2"/>
    <property type="match status" value="1"/>
</dbReference>
<dbReference type="InterPro" id="IPR029045">
    <property type="entry name" value="ClpP/crotonase-like_dom_sf"/>
</dbReference>
<dbReference type="InterPro" id="IPR018376">
    <property type="entry name" value="Enoyl-CoA_hyd/isom_CS"/>
</dbReference>
<dbReference type="InterPro" id="IPR001753">
    <property type="entry name" value="Enoyl-CoA_hydra/iso"/>
</dbReference>
<dbReference type="InterPro" id="IPR014748">
    <property type="entry name" value="Enoyl-CoA_hydra_C"/>
</dbReference>
<dbReference type="NCBIfam" id="NF004517">
    <property type="entry name" value="PRK05862.1"/>
    <property type="match status" value="1"/>
</dbReference>
<dbReference type="PANTHER" id="PTHR11941:SF54">
    <property type="entry name" value="ENOYL-COA HYDRATASE, MITOCHONDRIAL"/>
    <property type="match status" value="1"/>
</dbReference>
<dbReference type="PANTHER" id="PTHR11941">
    <property type="entry name" value="ENOYL-COA HYDRATASE-RELATED"/>
    <property type="match status" value="1"/>
</dbReference>
<dbReference type="Pfam" id="PF00378">
    <property type="entry name" value="ECH_1"/>
    <property type="match status" value="1"/>
</dbReference>
<dbReference type="SUPFAM" id="SSF52096">
    <property type="entry name" value="ClpP/crotonase"/>
    <property type="match status" value="1"/>
</dbReference>
<dbReference type="PROSITE" id="PS00166">
    <property type="entry name" value="ENOYL_COA_HYDRATASE"/>
    <property type="match status" value="1"/>
</dbReference>
<gene>
    <name type="primary">echA8</name>
    <name type="ordered locus">MT1100</name>
</gene>
<comment type="function">
    <text evidence="1">Could possibly oxidize fatty acids using specific components.</text>
</comment>
<comment type="catalytic activity">
    <reaction>
        <text>a (3S)-3-hydroxyacyl-CoA = a (2E)-enoyl-CoA + H2O</text>
        <dbReference type="Rhea" id="RHEA:16105"/>
        <dbReference type="ChEBI" id="CHEBI:15377"/>
        <dbReference type="ChEBI" id="CHEBI:57318"/>
        <dbReference type="ChEBI" id="CHEBI:58856"/>
        <dbReference type="EC" id="4.2.1.17"/>
    </reaction>
</comment>
<comment type="catalytic activity">
    <reaction>
        <text>a 4-saturated-(3S)-3-hydroxyacyl-CoA = a (3E)-enoyl-CoA + H2O</text>
        <dbReference type="Rhea" id="RHEA:20724"/>
        <dbReference type="ChEBI" id="CHEBI:15377"/>
        <dbReference type="ChEBI" id="CHEBI:58521"/>
        <dbReference type="ChEBI" id="CHEBI:137480"/>
        <dbReference type="EC" id="4.2.1.17"/>
    </reaction>
</comment>
<comment type="similarity">
    <text evidence="2">Belongs to the enoyl-CoA hydratase/isomerase family.</text>
</comment>
<reference key="1">
    <citation type="journal article" date="2002" name="J. Bacteriol.">
        <title>Whole-genome comparison of Mycobacterium tuberculosis clinical and laboratory strains.</title>
        <authorList>
            <person name="Fleischmann R.D."/>
            <person name="Alland D."/>
            <person name="Eisen J.A."/>
            <person name="Carpenter L."/>
            <person name="White O."/>
            <person name="Peterson J.D."/>
            <person name="DeBoy R.T."/>
            <person name="Dodson R.J."/>
            <person name="Gwinn M.L."/>
            <person name="Haft D.H."/>
            <person name="Hickey E.K."/>
            <person name="Kolonay J.F."/>
            <person name="Nelson W.C."/>
            <person name="Umayam L.A."/>
            <person name="Ermolaeva M.D."/>
            <person name="Salzberg S.L."/>
            <person name="Delcher A."/>
            <person name="Utterback T.R."/>
            <person name="Weidman J.F."/>
            <person name="Khouri H.M."/>
            <person name="Gill J."/>
            <person name="Mikula A."/>
            <person name="Bishai W."/>
            <person name="Jacobs W.R. Jr."/>
            <person name="Venter J.C."/>
            <person name="Fraser C.M."/>
        </authorList>
    </citation>
    <scope>NUCLEOTIDE SEQUENCE [LARGE SCALE GENOMIC DNA]</scope>
    <source>
        <strain>CDC 1551 / Oshkosh</strain>
    </source>
</reference>
<accession>P9WNN8</accession>
<accession>L0T5R3</accession>
<accession>O53418</accession>
<accession>P64016</accession>
<sequence>MTYETILVERDQRVGIITLNRPQALNALNSQVMNEVTSAATELDDDPDIGAIIITGSAKAFAAGADIKEMADLTFADAFTADFFATWGKLAAVRTPTIAAVAGYALGGGCELAMMCDVLIAADTAKFGQPEIKLGVLPGMGGSQRLTRAIGKAKAMDLILTGRTMDAAEAERSGLVSRVVPADDLLTEARATATTISQMSASAARMAKEAVNRAFESSLSEGLLYERRLFHSAFATEDQSEGMAAFIEKRAPQFTHR</sequence>
<name>ECHA8_MYCTO</name>
<organism>
    <name type="scientific">Mycobacterium tuberculosis (strain CDC 1551 / Oshkosh)</name>
    <dbReference type="NCBI Taxonomy" id="83331"/>
    <lineage>
        <taxon>Bacteria</taxon>
        <taxon>Bacillati</taxon>
        <taxon>Actinomycetota</taxon>
        <taxon>Actinomycetes</taxon>
        <taxon>Mycobacteriales</taxon>
        <taxon>Mycobacteriaceae</taxon>
        <taxon>Mycobacterium</taxon>
        <taxon>Mycobacterium tuberculosis complex</taxon>
    </lineage>
</organism>
<protein>
    <recommendedName>
        <fullName>Probable enoyl-CoA hydratase echA8</fullName>
        <ecNumber>4.2.1.17</ecNumber>
    </recommendedName>
</protein>